<name>TIP41_MAIZE</name>
<accession>Q9ATL6</accession>
<feature type="chain" id="PRO_0000286008" description="Aquaporin TIP4-1">
    <location>
        <begin position="1"/>
        <end position="255"/>
    </location>
</feature>
<feature type="transmembrane region" description="Helical; Name=1" evidence="2">
    <location>
        <begin position="25"/>
        <end position="45"/>
    </location>
</feature>
<feature type="transmembrane region" description="Helical; Name=2" evidence="2">
    <location>
        <begin position="61"/>
        <end position="81"/>
    </location>
</feature>
<feature type="transmembrane region" description="Helical; Name=3" evidence="2">
    <location>
        <begin position="108"/>
        <end position="128"/>
    </location>
</feature>
<feature type="transmembrane region" description="Helical; Name=4" evidence="2">
    <location>
        <begin position="148"/>
        <end position="168"/>
    </location>
</feature>
<feature type="transmembrane region" description="Helical; Name=5" evidence="2">
    <location>
        <begin position="176"/>
        <end position="196"/>
    </location>
</feature>
<feature type="transmembrane region" description="Helical; Name=6" evidence="2">
    <location>
        <begin position="223"/>
        <end position="243"/>
    </location>
</feature>
<feature type="short sequence motif" description="NPA 1" evidence="1">
    <location>
        <begin position="89"/>
        <end position="91"/>
    </location>
</feature>
<feature type="short sequence motif" description="NPA 2" evidence="1">
    <location>
        <begin position="202"/>
        <end position="204"/>
    </location>
</feature>
<gene>
    <name type="primary">TIP4-1</name>
</gene>
<organism>
    <name type="scientific">Zea mays</name>
    <name type="common">Maize</name>
    <dbReference type="NCBI Taxonomy" id="4577"/>
    <lineage>
        <taxon>Eukaryota</taxon>
        <taxon>Viridiplantae</taxon>
        <taxon>Streptophyta</taxon>
        <taxon>Embryophyta</taxon>
        <taxon>Tracheophyta</taxon>
        <taxon>Spermatophyta</taxon>
        <taxon>Magnoliopsida</taxon>
        <taxon>Liliopsida</taxon>
        <taxon>Poales</taxon>
        <taxon>Poaceae</taxon>
        <taxon>PACMAD clade</taxon>
        <taxon>Panicoideae</taxon>
        <taxon>Andropogonodae</taxon>
        <taxon>Andropogoneae</taxon>
        <taxon>Tripsacinae</taxon>
        <taxon>Zea</taxon>
    </lineage>
</organism>
<dbReference type="EMBL" id="AF326505">
    <property type="protein sequence ID" value="AAK26772.1"/>
    <property type="molecule type" value="mRNA"/>
</dbReference>
<dbReference type="RefSeq" id="NP_001105033.1">
    <property type="nucleotide sequence ID" value="NM_001111563.1"/>
</dbReference>
<dbReference type="SMR" id="Q9ATL6"/>
<dbReference type="FunCoup" id="Q9ATL6">
    <property type="interactions" value="782"/>
</dbReference>
<dbReference type="STRING" id="4577.Q9ATL6"/>
<dbReference type="GeneID" id="541897"/>
<dbReference type="KEGG" id="zma:541897"/>
<dbReference type="InParanoid" id="Q9ATL6"/>
<dbReference type="OrthoDB" id="3222at2759"/>
<dbReference type="Proteomes" id="UP000007305">
    <property type="component" value="Unplaced"/>
</dbReference>
<dbReference type="ExpressionAtlas" id="Q9ATL6">
    <property type="expression patterns" value="baseline and differential"/>
</dbReference>
<dbReference type="GO" id="GO:0016020">
    <property type="term" value="C:membrane"/>
    <property type="evidence" value="ECO:0000318"/>
    <property type="project" value="GO_Central"/>
</dbReference>
<dbReference type="GO" id="GO:0005774">
    <property type="term" value="C:vacuolar membrane"/>
    <property type="evidence" value="ECO:0007669"/>
    <property type="project" value="UniProtKB-SubCell"/>
</dbReference>
<dbReference type="GO" id="GO:0015250">
    <property type="term" value="F:water channel activity"/>
    <property type="evidence" value="ECO:0000318"/>
    <property type="project" value="GO_Central"/>
</dbReference>
<dbReference type="GO" id="GO:0006833">
    <property type="term" value="P:water transport"/>
    <property type="evidence" value="ECO:0000318"/>
    <property type="project" value="GO_Central"/>
</dbReference>
<dbReference type="FunFam" id="1.20.1080.10:FF:000002">
    <property type="entry name" value="Probable aquaporin TIP1-1"/>
    <property type="match status" value="1"/>
</dbReference>
<dbReference type="Gene3D" id="1.20.1080.10">
    <property type="entry name" value="Glycerol uptake facilitator protein"/>
    <property type="match status" value="1"/>
</dbReference>
<dbReference type="InterPro" id="IPR023271">
    <property type="entry name" value="Aquaporin-like"/>
</dbReference>
<dbReference type="InterPro" id="IPR034294">
    <property type="entry name" value="Aquaporin_transptr"/>
</dbReference>
<dbReference type="InterPro" id="IPR000425">
    <property type="entry name" value="MIP"/>
</dbReference>
<dbReference type="InterPro" id="IPR022357">
    <property type="entry name" value="MIP_CS"/>
</dbReference>
<dbReference type="PANTHER" id="PTHR45665:SF13">
    <property type="entry name" value="AQUAPORIN TIP4-1-RELATED"/>
    <property type="match status" value="1"/>
</dbReference>
<dbReference type="PANTHER" id="PTHR45665">
    <property type="entry name" value="AQUAPORIN-8"/>
    <property type="match status" value="1"/>
</dbReference>
<dbReference type="Pfam" id="PF00230">
    <property type="entry name" value="MIP"/>
    <property type="match status" value="1"/>
</dbReference>
<dbReference type="PRINTS" id="PR00783">
    <property type="entry name" value="MINTRINSICP"/>
</dbReference>
<dbReference type="SUPFAM" id="SSF81338">
    <property type="entry name" value="Aquaporin-like"/>
    <property type="match status" value="1"/>
</dbReference>
<dbReference type="PROSITE" id="PS00221">
    <property type="entry name" value="MIP"/>
    <property type="match status" value="1"/>
</dbReference>
<reference key="1">
    <citation type="journal article" date="2001" name="Plant Physiol.">
        <title>Aquaporins constitute a large and highly divergent protein family in maize.</title>
        <authorList>
            <person name="Chaumont F."/>
            <person name="Barrieu F."/>
            <person name="Wojcik E."/>
            <person name="Chrispeels M.J."/>
            <person name="Jung R."/>
        </authorList>
    </citation>
    <scope>NUCLEOTIDE SEQUENCE [MRNA]</scope>
    <scope>GENE FAMILY</scope>
    <scope>NOMENCLATURE</scope>
    <source>
        <strain>cv. B73</strain>
    </source>
</reference>
<proteinExistence type="evidence at transcript level"/>
<keyword id="KW-0472">Membrane</keyword>
<keyword id="KW-1185">Reference proteome</keyword>
<keyword id="KW-0677">Repeat</keyword>
<keyword id="KW-0812">Transmembrane</keyword>
<keyword id="KW-1133">Transmembrane helix</keyword>
<keyword id="KW-0813">Transport</keyword>
<keyword id="KW-0926">Vacuole</keyword>
<comment type="function">
    <text evidence="1">Aquaporins facilitate the transport of water and small neutral solutes across cell membranes.</text>
</comment>
<comment type="subcellular location">
    <subcellularLocation>
        <location evidence="1">Vacuole membrane</location>
        <topology evidence="1">Multi-pass membrane protein</topology>
    </subcellularLocation>
    <text>Tonoplast.</text>
</comment>
<comment type="domain">
    <text>Aquaporins contain two tandem repeats each containing three membrane-spanning domains and a pore-forming loop with the signature motif Asn-Pro-Ala (NPA).</text>
</comment>
<comment type="similarity">
    <text evidence="3">Belongs to the MIP/aquaporin (TC 1.A.8) family. TIP (TC 1.A.8.10) subfamily.</text>
</comment>
<sequence length="255" mass="26519">MAKLMNKLVDSFEHDEIPDVGCVRAVLAELVLTFLFVFTGVSAAMAAGSDGKPGDAMPMATLAAVAIAHALAAGVLVTAGFHVSGGHLNPAVTVGLMVRGHITKLRAVLYVAAQLLASSAACVLLRFLSGGMVTPVHALGRGISPMQGLVMEVILTFSLLFVTYAMILDPRSQVRAIGPLLTGLIVGANSLAGGNFTGASMNPARSFGPALATGDWTNHWVYWIGPLLGGPLAGFVYESLFLVQKMHEPLLNGEV</sequence>
<evidence type="ECO:0000250" key="1"/>
<evidence type="ECO:0000255" key="2"/>
<evidence type="ECO:0000305" key="3"/>
<protein>
    <recommendedName>
        <fullName>Aquaporin TIP4-1</fullName>
    </recommendedName>
    <alternativeName>
        <fullName>Tonoplast intrinsic protein 4-1</fullName>
    </alternativeName>
    <alternativeName>
        <fullName>ZmTIP4-1</fullName>
    </alternativeName>
    <alternativeName>
        <fullName>ZmTIP4;1</fullName>
    </alternativeName>
</protein>